<feature type="chain" id="PRO_0000145452" description="Type 2 DNA topoisomerase 6 subunit A">
    <location>
        <begin position="1"/>
        <end position="382"/>
    </location>
</feature>
<feature type="domain" description="Topo IIA-type catalytic" evidence="2">
    <location>
        <begin position="14"/>
        <end position="155"/>
    </location>
</feature>
<feature type="active site" description="O-(5'-phospho-DNA)-tyrosine intermediate" evidence="2">
    <location>
        <position position="108"/>
    </location>
</feature>
<feature type="binding site" evidence="1">
    <location>
        <position position="202"/>
    </location>
    <ligand>
        <name>Mg(2+)</name>
        <dbReference type="ChEBI" id="CHEBI:18420"/>
    </ligand>
</feature>
<feature type="binding site" evidence="1">
    <location>
        <position position="254"/>
    </location>
    <ligand>
        <name>Mg(2+)</name>
        <dbReference type="ChEBI" id="CHEBI:18420"/>
    </ligand>
</feature>
<sequence>MKLKRQKPKEKFSYDPQKVLKKLEDLAWKILEEVKSGKNPYFDVPTRGLNNVYFDEEARLIKLGDKLSRRYFLNVAHARKFTQTLILMAYIKRLVSEGKHASLREAYYANKHTIPGTRENTFEDQSESDPIIEDLERMLGVLREEMHITADRRGYIYGDIVIKDGEDEFNASKLGTGGWAVPGTVEHIQFPEVNVDYVLVVETAAMADRLIEEKYPKKENCLIVATQGQASRGVRRLIHRLHYEEGLPIIVFTDGDPYGWYIYSTIKQGSINLAYLSEKLATPDAKFVGMTMDDIKEYNLEHVTEKLKGIPPDKKGGPTGDYKRLIEELNYPWFQNKEWQRQLKLALKWGVRIEQQALANKSLEFVAKEYLPEKIREGKLLP</sequence>
<gene>
    <name evidence="1" type="primary">top6A</name>
    <name type="ordered locus">PYRAB05950</name>
    <name type="ORF">PAB2411</name>
</gene>
<organism>
    <name type="scientific">Pyrococcus abyssi (strain GE5 / Orsay)</name>
    <dbReference type="NCBI Taxonomy" id="272844"/>
    <lineage>
        <taxon>Archaea</taxon>
        <taxon>Methanobacteriati</taxon>
        <taxon>Methanobacteriota</taxon>
        <taxon>Thermococci</taxon>
        <taxon>Thermococcales</taxon>
        <taxon>Thermococcaceae</taxon>
        <taxon>Pyrococcus</taxon>
    </lineage>
</organism>
<keyword id="KW-0067">ATP-binding</keyword>
<keyword id="KW-0238">DNA-binding</keyword>
<keyword id="KW-0413">Isomerase</keyword>
<keyword id="KW-0460">Magnesium</keyword>
<keyword id="KW-0479">Metal-binding</keyword>
<keyword id="KW-0547">Nucleotide-binding</keyword>
<keyword id="KW-0799">Topoisomerase</keyword>
<protein>
    <recommendedName>
        <fullName evidence="1">Type 2 DNA topoisomerase 6 subunit A</fullName>
        <ecNumber evidence="1">5.6.2.2</ecNumber>
    </recommendedName>
    <alternativeName>
        <fullName evidence="1">Type II DNA topoisomerase VI subunit A</fullName>
    </alternativeName>
</protein>
<reference key="1">
    <citation type="journal article" date="2003" name="Mol. Microbiol.">
        <title>An integrated analysis of the genome of the hyperthermophilic archaeon Pyrococcus abyssi.</title>
        <authorList>
            <person name="Cohen G.N."/>
            <person name="Barbe V."/>
            <person name="Flament D."/>
            <person name="Galperin M."/>
            <person name="Heilig R."/>
            <person name="Lecompte O."/>
            <person name="Poch O."/>
            <person name="Prieur D."/>
            <person name="Querellou J."/>
            <person name="Ripp R."/>
            <person name="Thierry J.-C."/>
            <person name="Van der Oost J."/>
            <person name="Weissenbach J."/>
            <person name="Zivanovic Y."/>
            <person name="Forterre P."/>
        </authorList>
    </citation>
    <scope>NUCLEOTIDE SEQUENCE [LARGE SCALE GENOMIC DNA]</scope>
    <source>
        <strain>GE5 / Orsay</strain>
    </source>
</reference>
<reference key="2">
    <citation type="journal article" date="2012" name="Curr. Microbiol.">
        <title>Re-annotation of two hyperthermophilic archaea Pyrococcus abyssi GE5 and Pyrococcus furiosus DSM 3638.</title>
        <authorList>
            <person name="Gao J."/>
            <person name="Wang J."/>
        </authorList>
    </citation>
    <scope>GENOME REANNOTATION</scope>
    <source>
        <strain>GE5 / Orsay</strain>
    </source>
</reference>
<name>TOP6A_PYRAB</name>
<accession>Q9V134</accession>
<accession>G8ZJ60</accession>
<dbReference type="EC" id="5.6.2.2" evidence="1"/>
<dbReference type="EMBL" id="AJ248284">
    <property type="protein sequence ID" value="CAB49517.1"/>
    <property type="molecule type" value="Genomic_DNA"/>
</dbReference>
<dbReference type="EMBL" id="HE613800">
    <property type="protein sequence ID" value="CCE69987.1"/>
    <property type="molecule type" value="Genomic_DNA"/>
</dbReference>
<dbReference type="PIR" id="F75179">
    <property type="entry name" value="F75179"/>
</dbReference>
<dbReference type="RefSeq" id="WP_010867719.1">
    <property type="nucleotide sequence ID" value="NC_000868.1"/>
</dbReference>
<dbReference type="SMR" id="Q9V134"/>
<dbReference type="IntAct" id="Q9V134">
    <property type="interactions" value="1"/>
</dbReference>
<dbReference type="MINT" id="Q9V134"/>
<dbReference type="STRING" id="272844.PAB2411"/>
<dbReference type="KEGG" id="pab:PAB2411"/>
<dbReference type="PATRIC" id="fig|272844.11.peg.633"/>
<dbReference type="eggNOG" id="arCOG04143">
    <property type="taxonomic scope" value="Archaea"/>
</dbReference>
<dbReference type="HOGENOM" id="CLU_037229_1_0_2"/>
<dbReference type="OrthoDB" id="5866at2157"/>
<dbReference type="PhylomeDB" id="Q9V134"/>
<dbReference type="Proteomes" id="UP000000810">
    <property type="component" value="Chromosome"/>
</dbReference>
<dbReference type="Proteomes" id="UP000009139">
    <property type="component" value="Chromosome"/>
</dbReference>
<dbReference type="GO" id="GO:0005694">
    <property type="term" value="C:chromosome"/>
    <property type="evidence" value="ECO:0007669"/>
    <property type="project" value="InterPro"/>
</dbReference>
<dbReference type="GO" id="GO:0005524">
    <property type="term" value="F:ATP binding"/>
    <property type="evidence" value="ECO:0007669"/>
    <property type="project" value="UniProtKB-KW"/>
</dbReference>
<dbReference type="GO" id="GO:0003677">
    <property type="term" value="F:DNA binding"/>
    <property type="evidence" value="ECO:0007669"/>
    <property type="project" value="UniProtKB-UniRule"/>
</dbReference>
<dbReference type="GO" id="GO:0003918">
    <property type="term" value="F:DNA topoisomerase type II (double strand cut, ATP-hydrolyzing) activity"/>
    <property type="evidence" value="ECO:0007669"/>
    <property type="project" value="UniProtKB-UniRule"/>
</dbReference>
<dbReference type="GO" id="GO:0000287">
    <property type="term" value="F:magnesium ion binding"/>
    <property type="evidence" value="ECO:0007669"/>
    <property type="project" value="UniProtKB-UniRule"/>
</dbReference>
<dbReference type="GO" id="GO:0006265">
    <property type="term" value="P:DNA topological change"/>
    <property type="evidence" value="ECO:0007669"/>
    <property type="project" value="UniProtKB-UniRule"/>
</dbReference>
<dbReference type="CDD" id="cd00223">
    <property type="entry name" value="TOPRIM_TopoIIB_SPO"/>
    <property type="match status" value="1"/>
</dbReference>
<dbReference type="FunFam" id="3.40.1360.10:FF:000011">
    <property type="entry name" value="Type 2 DNA topoisomerase 6 subunit A"/>
    <property type="match status" value="1"/>
</dbReference>
<dbReference type="Gene3D" id="3.40.1360.10">
    <property type="match status" value="1"/>
</dbReference>
<dbReference type="Gene3D" id="1.10.10.10">
    <property type="entry name" value="Winged helix-like DNA-binding domain superfamily/Winged helix DNA-binding domain"/>
    <property type="match status" value="1"/>
</dbReference>
<dbReference type="HAMAP" id="MF_00132">
    <property type="entry name" value="Top6A"/>
    <property type="match status" value="1"/>
</dbReference>
<dbReference type="InterPro" id="IPR002815">
    <property type="entry name" value="Spo11/TopoVI_A"/>
</dbReference>
<dbReference type="InterPro" id="IPR013049">
    <property type="entry name" value="Spo11/TopoVI_A_N"/>
</dbReference>
<dbReference type="InterPro" id="IPR036078">
    <property type="entry name" value="Spo11/TopoVI_A_sf"/>
</dbReference>
<dbReference type="InterPro" id="IPR049333">
    <property type="entry name" value="Topo_VI_alpha"/>
</dbReference>
<dbReference type="InterPro" id="IPR004085">
    <property type="entry name" value="TopoVI_A"/>
</dbReference>
<dbReference type="InterPro" id="IPR034136">
    <property type="entry name" value="TOPRIM_Topo6A/Spo11"/>
</dbReference>
<dbReference type="InterPro" id="IPR036388">
    <property type="entry name" value="WH-like_DNA-bd_sf"/>
</dbReference>
<dbReference type="NCBIfam" id="NF003333">
    <property type="entry name" value="PRK04342.1-2"/>
    <property type="match status" value="1"/>
</dbReference>
<dbReference type="PANTHER" id="PTHR10848">
    <property type="entry name" value="MEIOTIC RECOMBINATION PROTEIN SPO11"/>
    <property type="match status" value="1"/>
</dbReference>
<dbReference type="PANTHER" id="PTHR10848:SF0">
    <property type="entry name" value="MEIOTIC RECOMBINATION PROTEIN SPO11"/>
    <property type="match status" value="1"/>
</dbReference>
<dbReference type="Pfam" id="PF21180">
    <property type="entry name" value="TOP6A-Spo11_Toprim"/>
    <property type="match status" value="1"/>
</dbReference>
<dbReference type="Pfam" id="PF20768">
    <property type="entry name" value="Topo_VI_alpha"/>
    <property type="match status" value="1"/>
</dbReference>
<dbReference type="Pfam" id="PF04406">
    <property type="entry name" value="TP6A_N"/>
    <property type="match status" value="1"/>
</dbReference>
<dbReference type="PRINTS" id="PR01550">
    <property type="entry name" value="TOP6AFAMILY"/>
</dbReference>
<dbReference type="PRINTS" id="PR01552">
    <property type="entry name" value="TPISMRASE6A"/>
</dbReference>
<dbReference type="SUPFAM" id="SSF56726">
    <property type="entry name" value="DNA topoisomerase IV, alpha subunit"/>
    <property type="match status" value="1"/>
</dbReference>
<dbReference type="PROSITE" id="PS52041">
    <property type="entry name" value="TOPO_IIB"/>
    <property type="match status" value="1"/>
</dbReference>
<evidence type="ECO:0000255" key="1">
    <source>
        <dbReference type="HAMAP-Rule" id="MF_00132"/>
    </source>
</evidence>
<evidence type="ECO:0000255" key="2">
    <source>
        <dbReference type="PROSITE-ProRule" id="PRU01385"/>
    </source>
</evidence>
<proteinExistence type="inferred from homology"/>
<comment type="function">
    <text evidence="1">Relaxes both positive and negative superturns and exhibits a strong decatenase activity.</text>
</comment>
<comment type="catalytic activity">
    <reaction evidence="1">
        <text>ATP-dependent breakage, passage and rejoining of double-stranded DNA.</text>
        <dbReference type="EC" id="5.6.2.2"/>
    </reaction>
</comment>
<comment type="cofactor">
    <cofactor evidence="1">
        <name>Mg(2+)</name>
        <dbReference type="ChEBI" id="CHEBI:18420"/>
    </cofactor>
</comment>
<comment type="subunit">
    <text evidence="1">Homodimer. Heterotetramer of two Top6A and two Top6B chains.</text>
</comment>
<comment type="similarity">
    <text evidence="1">Belongs to the TOP6A family.</text>
</comment>